<sequence>EDHPVHNRGEYSVCDSVNVWV</sequence>
<comment type="function">
    <text evidence="2 3">Nerve growth factor is important for the development and maintenance of the sympathetic and sensory nervous systems. It stimulates division and differentiation of sympathetic and embryonic sensory neurons as well as basal forebrain cholinergic neurons in the brain. Its relevance in the snake venom is not clear. However, it has been shown to inhibit metalloproteinase-dependent proteolysis of platelet glycoprotein Ib alpha, suggesting a metalloproteinase inhibition to prevent metalloprotease autodigestion and/or protection against prey proteases (By similarity). Binds a lipid between the two protein chains in the homodimer. The lipid-bound form promotes histamine relase from mouse mast cells, contrary to the lipid-free form (By similarity).</text>
</comment>
<comment type="subunit">
    <text evidence="2">Homodimer; non-covalently linked.</text>
</comment>
<comment type="subcellular location">
    <subcellularLocation>
        <location evidence="4">Secreted</location>
    </subcellularLocation>
</comment>
<comment type="tissue specificity">
    <text evidence="6">Expressed by the venom gland.</text>
</comment>
<comment type="PTM">
    <text evidence="1">Glycosylated.</text>
</comment>
<comment type="similarity">
    <text evidence="5">Belongs to the NGF-beta family.</text>
</comment>
<name>NGFV_BOTCO</name>
<reference key="1">
    <citation type="journal article" date="2008" name="J. Proteomics">
        <title>Snake venomics of the Brazilian pitvipers Bothrops cotiara and Bothrops fonsecai. Identification of taxonomy markers.</title>
        <authorList>
            <person name="Tashima A.K."/>
            <person name="Sanz L."/>
            <person name="Camargo A.C."/>
            <person name="Serrano S.M."/>
            <person name="Calvete J.J."/>
        </authorList>
    </citation>
    <scope>PROTEIN SEQUENCE</scope>
    <scope>SUBCELLULAR LOCATION</scope>
    <scope>TISSUE SPECIFICITY</scope>
    <source>
        <tissue>Venom</tissue>
    </source>
</reference>
<feature type="chain" id="PRO_0000428807" description="Venom nerve growth factor Bco12">
    <location>
        <begin position="1"/>
        <end position="21" status="greater than"/>
    </location>
</feature>
<feature type="disulfide bond" evidence="1">
    <location>
        <begin position="14"/>
        <end status="unknown"/>
    </location>
</feature>
<feature type="non-terminal residue">
    <location>
        <position position="21"/>
    </location>
</feature>
<organism>
    <name type="scientific">Bothrops cotiara</name>
    <name type="common">Cotiara</name>
    <name type="synonym">Rhinocerophis cotiara</name>
    <dbReference type="NCBI Taxonomy" id="8727"/>
    <lineage>
        <taxon>Eukaryota</taxon>
        <taxon>Metazoa</taxon>
        <taxon>Chordata</taxon>
        <taxon>Craniata</taxon>
        <taxon>Vertebrata</taxon>
        <taxon>Euteleostomi</taxon>
        <taxon>Lepidosauria</taxon>
        <taxon>Squamata</taxon>
        <taxon>Bifurcata</taxon>
        <taxon>Unidentata</taxon>
        <taxon>Episquamata</taxon>
        <taxon>Toxicofera</taxon>
        <taxon>Serpentes</taxon>
        <taxon>Colubroidea</taxon>
        <taxon>Viperidae</taxon>
        <taxon>Crotalinae</taxon>
        <taxon>Bothrops</taxon>
    </lineage>
</organism>
<keyword id="KW-0903">Direct protein sequencing</keyword>
<keyword id="KW-1015">Disulfide bond</keyword>
<keyword id="KW-0325">Glycoprotein</keyword>
<keyword id="KW-0339">Growth factor</keyword>
<keyword id="KW-0446">Lipid-binding</keyword>
<keyword id="KW-0481">Metalloenzyme inhibitor</keyword>
<keyword id="KW-0483">Metalloprotease inhibitor</keyword>
<keyword id="KW-0646">Protease inhibitor</keyword>
<keyword id="KW-0964">Secreted</keyword>
<keyword id="KW-0800">Toxin</keyword>
<evidence type="ECO:0000250" key="1"/>
<evidence type="ECO:0000250" key="2">
    <source>
        <dbReference type="UniProtKB" id="P61898"/>
    </source>
</evidence>
<evidence type="ECO:0000250" key="3">
    <source>
        <dbReference type="UniProtKB" id="P61899"/>
    </source>
</evidence>
<evidence type="ECO:0000269" key="4">
    <source>
    </source>
</evidence>
<evidence type="ECO:0000305" key="5"/>
<evidence type="ECO:0000305" key="6">
    <source>
    </source>
</evidence>
<accession>P0DMG7</accession>
<protein>
    <recommendedName>
        <fullName>Venom nerve growth factor Bco12</fullName>
        <shortName>v-NGF</shortName>
        <shortName>vNGF</shortName>
    </recommendedName>
</protein>
<proteinExistence type="evidence at protein level"/>
<dbReference type="GO" id="GO:0005576">
    <property type="term" value="C:extracellular region"/>
    <property type="evidence" value="ECO:0007669"/>
    <property type="project" value="UniProtKB-SubCell"/>
</dbReference>
<dbReference type="GO" id="GO:0008083">
    <property type="term" value="F:growth factor activity"/>
    <property type="evidence" value="ECO:0007669"/>
    <property type="project" value="UniProtKB-KW"/>
</dbReference>
<dbReference type="GO" id="GO:0008289">
    <property type="term" value="F:lipid binding"/>
    <property type="evidence" value="ECO:0007669"/>
    <property type="project" value="UniProtKB-KW"/>
</dbReference>
<dbReference type="GO" id="GO:0030414">
    <property type="term" value="F:peptidase inhibitor activity"/>
    <property type="evidence" value="ECO:0007669"/>
    <property type="project" value="UniProtKB-KW"/>
</dbReference>
<dbReference type="GO" id="GO:0090729">
    <property type="term" value="F:toxin activity"/>
    <property type="evidence" value="ECO:0007669"/>
    <property type="project" value="UniProtKB-KW"/>
</dbReference>
<dbReference type="PROSITE" id="PS50270">
    <property type="entry name" value="NGF_2"/>
    <property type="match status" value="1"/>
</dbReference>